<comment type="function">
    <text evidence="2">Involved in the regulation of plant growth, and modulates pollen development to ensure male fertility (PubMed:26485022). May also affect the composition of the inner seed coat mucilage layer (PubMed:26485022).</text>
</comment>
<comment type="subunit">
    <text evidence="3">Interacts with EXO70C2.</text>
</comment>
<comment type="subcellular location">
    <subcellularLocation>
        <location evidence="1">Membrane</location>
        <topology evidence="1">Single-pass membrane protein</topology>
    </subcellularLocation>
    <subcellularLocation>
        <location evidence="2">Cytoplasm</location>
        <location evidence="2">Cytosol</location>
    </subcellularLocation>
    <text evidence="2">Present in the cytosol of cells of the root apical meristem and transition zone.</text>
</comment>
<comment type="tissue specificity">
    <text evidence="4">Mostly expressed in mature pollen.</text>
</comment>
<comment type="disruption phenotype">
    <text evidence="2">No visible phenotype.</text>
</comment>
<comment type="miscellaneous">
    <text evidence="6">'Roh' means corner in Czech.</text>
</comment>
<comment type="similarity">
    <text evidence="6">Belongs to the ROH1 family.</text>
</comment>
<protein>
    <recommendedName>
        <fullName evidence="5">Protein ROH1D</fullName>
    </recommendedName>
</protein>
<name>ROH1D_ARATH</name>
<gene>
    <name evidence="5" type="primary">ROH1D</name>
    <name evidence="7" type="ordered locus">At1g74450</name>
    <name evidence="8" type="ORF">F1M20.13</name>
</gene>
<keyword id="KW-0963">Cytoplasm</keyword>
<keyword id="KW-0472">Membrane</keyword>
<keyword id="KW-1185">Reference proteome</keyword>
<keyword id="KW-0812">Transmembrane</keyword>
<keyword id="KW-1133">Transmembrane helix</keyword>
<reference key="1">
    <citation type="journal article" date="2000" name="Nature">
        <title>Sequence and analysis of chromosome 1 of the plant Arabidopsis thaliana.</title>
        <authorList>
            <person name="Theologis A."/>
            <person name="Ecker J.R."/>
            <person name="Palm C.J."/>
            <person name="Federspiel N.A."/>
            <person name="Kaul S."/>
            <person name="White O."/>
            <person name="Alonso J."/>
            <person name="Altafi H."/>
            <person name="Araujo R."/>
            <person name="Bowman C.L."/>
            <person name="Brooks S.Y."/>
            <person name="Buehler E."/>
            <person name="Chan A."/>
            <person name="Chao Q."/>
            <person name="Chen H."/>
            <person name="Cheuk R.F."/>
            <person name="Chin C.W."/>
            <person name="Chung M.K."/>
            <person name="Conn L."/>
            <person name="Conway A.B."/>
            <person name="Conway A.R."/>
            <person name="Creasy T.H."/>
            <person name="Dewar K."/>
            <person name="Dunn P."/>
            <person name="Etgu P."/>
            <person name="Feldblyum T.V."/>
            <person name="Feng J.-D."/>
            <person name="Fong B."/>
            <person name="Fujii C.Y."/>
            <person name="Gill J.E."/>
            <person name="Goldsmith A.D."/>
            <person name="Haas B."/>
            <person name="Hansen N.F."/>
            <person name="Hughes B."/>
            <person name="Huizar L."/>
            <person name="Hunter J.L."/>
            <person name="Jenkins J."/>
            <person name="Johnson-Hopson C."/>
            <person name="Khan S."/>
            <person name="Khaykin E."/>
            <person name="Kim C.J."/>
            <person name="Koo H.L."/>
            <person name="Kremenetskaia I."/>
            <person name="Kurtz D.B."/>
            <person name="Kwan A."/>
            <person name="Lam B."/>
            <person name="Langin-Hooper S."/>
            <person name="Lee A."/>
            <person name="Lee J.M."/>
            <person name="Lenz C.A."/>
            <person name="Li J.H."/>
            <person name="Li Y.-P."/>
            <person name="Lin X."/>
            <person name="Liu S.X."/>
            <person name="Liu Z.A."/>
            <person name="Luros J.S."/>
            <person name="Maiti R."/>
            <person name="Marziali A."/>
            <person name="Militscher J."/>
            <person name="Miranda M."/>
            <person name="Nguyen M."/>
            <person name="Nierman W.C."/>
            <person name="Osborne B.I."/>
            <person name="Pai G."/>
            <person name="Peterson J."/>
            <person name="Pham P.K."/>
            <person name="Rizzo M."/>
            <person name="Rooney T."/>
            <person name="Rowley D."/>
            <person name="Sakano H."/>
            <person name="Salzberg S.L."/>
            <person name="Schwartz J.R."/>
            <person name="Shinn P."/>
            <person name="Southwick A.M."/>
            <person name="Sun H."/>
            <person name="Tallon L.J."/>
            <person name="Tambunga G."/>
            <person name="Toriumi M.J."/>
            <person name="Town C.D."/>
            <person name="Utterback T."/>
            <person name="Van Aken S."/>
            <person name="Vaysberg M."/>
            <person name="Vysotskaia V.S."/>
            <person name="Walker M."/>
            <person name="Wu D."/>
            <person name="Yu G."/>
            <person name="Fraser C.M."/>
            <person name="Venter J.C."/>
            <person name="Davis R.W."/>
        </authorList>
    </citation>
    <scope>NUCLEOTIDE SEQUENCE [LARGE SCALE GENOMIC DNA]</scope>
    <source>
        <strain>cv. Columbia</strain>
    </source>
</reference>
<reference key="2">
    <citation type="journal article" date="2017" name="Plant J.">
        <title>Araport11: a complete reannotation of the Arabidopsis thaliana reference genome.</title>
        <authorList>
            <person name="Cheng C.Y."/>
            <person name="Krishnakumar V."/>
            <person name="Chan A.P."/>
            <person name="Thibaud-Nissen F."/>
            <person name="Schobel S."/>
            <person name="Town C.D."/>
        </authorList>
    </citation>
    <scope>GENOME REANNOTATION</scope>
    <source>
        <strain>cv. Columbia</strain>
    </source>
</reference>
<reference key="3">
    <citation type="journal article" date="2003" name="Science">
        <title>Empirical analysis of transcriptional activity in the Arabidopsis genome.</title>
        <authorList>
            <person name="Yamada K."/>
            <person name="Lim J."/>
            <person name="Dale J.M."/>
            <person name="Chen H."/>
            <person name="Shinn P."/>
            <person name="Palm C.J."/>
            <person name="Southwick A.M."/>
            <person name="Wu H.C."/>
            <person name="Kim C.J."/>
            <person name="Nguyen M."/>
            <person name="Pham P.K."/>
            <person name="Cheuk R.F."/>
            <person name="Karlin-Newmann G."/>
            <person name="Liu S.X."/>
            <person name="Lam B."/>
            <person name="Sakano H."/>
            <person name="Wu T."/>
            <person name="Yu G."/>
            <person name="Miranda M."/>
            <person name="Quach H.L."/>
            <person name="Tripp M."/>
            <person name="Chang C.H."/>
            <person name="Lee J.M."/>
            <person name="Toriumi M.J."/>
            <person name="Chan M.M."/>
            <person name="Tang C.C."/>
            <person name="Onodera C.S."/>
            <person name="Deng J.M."/>
            <person name="Akiyama K."/>
            <person name="Ansari Y."/>
            <person name="Arakawa T."/>
            <person name="Banh J."/>
            <person name="Banno F."/>
            <person name="Bowser L."/>
            <person name="Brooks S.Y."/>
            <person name="Carninci P."/>
            <person name="Chao Q."/>
            <person name="Choy N."/>
            <person name="Enju A."/>
            <person name="Goldsmith A.D."/>
            <person name="Gurjal M."/>
            <person name="Hansen N.F."/>
            <person name="Hayashizaki Y."/>
            <person name="Johnson-Hopson C."/>
            <person name="Hsuan V.W."/>
            <person name="Iida K."/>
            <person name="Karnes M."/>
            <person name="Khan S."/>
            <person name="Koesema E."/>
            <person name="Ishida J."/>
            <person name="Jiang P.X."/>
            <person name="Jones T."/>
            <person name="Kawai J."/>
            <person name="Kamiya A."/>
            <person name="Meyers C."/>
            <person name="Nakajima M."/>
            <person name="Narusaka M."/>
            <person name="Seki M."/>
            <person name="Sakurai T."/>
            <person name="Satou M."/>
            <person name="Tamse R."/>
            <person name="Vaysberg M."/>
            <person name="Wallender E.K."/>
            <person name="Wong C."/>
            <person name="Yamamura Y."/>
            <person name="Yuan S."/>
            <person name="Shinozaki K."/>
            <person name="Davis R.W."/>
            <person name="Theologis A."/>
            <person name="Ecker J.R."/>
        </authorList>
    </citation>
    <scope>NUCLEOTIDE SEQUENCE [LARGE SCALE MRNA]</scope>
    <source>
        <strain>cv. Columbia</strain>
    </source>
</reference>
<reference key="4">
    <citation type="submission" date="2002-03" db="EMBL/GenBank/DDBJ databases">
        <title>Full-length cDNA from Arabidopsis thaliana.</title>
        <authorList>
            <person name="Brover V.V."/>
            <person name="Troukhan M.E."/>
            <person name="Alexandrov N.A."/>
            <person name="Lu Y.-P."/>
            <person name="Flavell R.B."/>
            <person name="Feldmann K.A."/>
        </authorList>
    </citation>
    <scope>NUCLEOTIDE SEQUENCE [LARGE SCALE MRNA]</scope>
</reference>
<reference key="5">
    <citation type="journal article" date="2015" name="PLoS ONE">
        <title>Overexpressing the multiple-stress responsive gene At1g74450 reduces plant height and male fertility in Arabidopsis thaliana.</title>
        <authorList>
            <person name="Visscher A.M."/>
            <person name="Belfield E.J."/>
            <person name="Vlad D."/>
            <person name="Irani N."/>
            <person name="Moore I."/>
            <person name="Harberd N.P."/>
        </authorList>
    </citation>
    <scope>FUNCTION</scope>
    <scope>DISRUPTION PHENOTYPE</scope>
    <scope>SUBCELLULAR LOCATION</scope>
    <scope>TISSUE SPECIFICITY</scope>
    <source>
        <strain>cv. Columbia</strain>
    </source>
</reference>
<reference key="6">
    <citation type="journal article" date="2020" name="Front. Plant Sci.">
        <title>Regulation of exocyst function in pollen tube growth by phosphorylation of exocyst subunit EXO70C2.</title>
        <authorList>
            <person name="Saccomanno A."/>
            <person name="Potocky M."/>
            <person name="Pejchar P."/>
            <person name="Hala M."/>
            <person name="Shikata H."/>
            <person name="Schwechheimer C."/>
            <person name="Zarsky V."/>
        </authorList>
    </citation>
    <scope>INTERACTION WITH EXO70C2</scope>
    <source>
        <strain>cv. Columbia</strain>
    </source>
</reference>
<evidence type="ECO:0000255" key="1"/>
<evidence type="ECO:0000269" key="2">
    <source>
    </source>
</evidence>
<evidence type="ECO:0000269" key="3">
    <source>
    </source>
</evidence>
<evidence type="ECO:0000303" key="4">
    <source>
    </source>
</evidence>
<evidence type="ECO:0000303" key="5">
    <source>
    </source>
</evidence>
<evidence type="ECO:0000305" key="6"/>
<evidence type="ECO:0000312" key="7">
    <source>
        <dbReference type="Araport" id="AT1G74450"/>
    </source>
</evidence>
<evidence type="ECO:0000312" key="8">
    <source>
        <dbReference type="EMBL" id="AAG52364.1"/>
    </source>
</evidence>
<proteinExistence type="evidence at protein level"/>
<accession>Q9CA69</accession>
<accession>Q8LG71</accession>
<sequence>MPATEYQRSFGRSFLNLRRDTAVNSVESTTVTPELTQMEAELVSFQRKVAERFIDLNASSCEDLLSLEWVGKLLDSFLSCQEEFRSIVINHRSMITKPPMDRLVSDYFERSVKALDVCNAIRDGVEQIRQWQKLIEIVICAFNNNGGGSSGKRPLGEGQFRRARKTLIELAIGMLDEKDSSSSSVSSQHRNRSFGRNKEQLHHRTIGHFRSLSWSVSRSWSASKQLQAIGNNLATPRASDITATNGLIVPVYTMTTVLLFVMWALVAAIPCQDRGLQVHFNVPRNYQWGGSLMSLHDRIIEESKKRERKNTCGLLKEIHQFEKTSRLMNELVDSVQFPLSEEKEMEVRERVEELGKLQEALKNGLDPFERKVREVFHRIVRSRTEGLDTVGKHHGSE</sequence>
<organism>
    <name type="scientific">Arabidopsis thaliana</name>
    <name type="common">Mouse-ear cress</name>
    <dbReference type="NCBI Taxonomy" id="3702"/>
    <lineage>
        <taxon>Eukaryota</taxon>
        <taxon>Viridiplantae</taxon>
        <taxon>Streptophyta</taxon>
        <taxon>Embryophyta</taxon>
        <taxon>Tracheophyta</taxon>
        <taxon>Spermatophyta</taxon>
        <taxon>Magnoliopsida</taxon>
        <taxon>eudicotyledons</taxon>
        <taxon>Gunneridae</taxon>
        <taxon>Pentapetalae</taxon>
        <taxon>rosids</taxon>
        <taxon>malvids</taxon>
        <taxon>Brassicales</taxon>
        <taxon>Brassicaceae</taxon>
        <taxon>Camelineae</taxon>
        <taxon>Arabidopsis</taxon>
    </lineage>
</organism>
<feature type="chain" id="PRO_0000458270" description="Protein ROH1D">
    <location>
        <begin position="1"/>
        <end position="397"/>
    </location>
</feature>
<feature type="transmembrane region" description="Helical" evidence="1">
    <location>
        <begin position="247"/>
        <end position="267"/>
    </location>
</feature>
<feature type="sequence conflict" description="In Ref. 4; AAM61006." evidence="6" ref="4">
    <original>G</original>
    <variation>A</variation>
    <location>
        <position position="146"/>
    </location>
</feature>
<feature type="sequence conflict" description="In Ref. 4; AAM61006." evidence="6" ref="4">
    <original>T</original>
    <variation>S</variation>
    <location>
        <position position="256"/>
    </location>
</feature>
<dbReference type="EMBL" id="AC011765">
    <property type="protein sequence ID" value="AAG52364.1"/>
    <property type="molecule type" value="Genomic_DNA"/>
</dbReference>
<dbReference type="EMBL" id="CP002684">
    <property type="protein sequence ID" value="AEE35594.1"/>
    <property type="molecule type" value="Genomic_DNA"/>
</dbReference>
<dbReference type="EMBL" id="AF428357">
    <property type="protein sequence ID" value="AAL16287.1"/>
    <property type="molecule type" value="mRNA"/>
</dbReference>
<dbReference type="EMBL" id="AY072219">
    <property type="protein sequence ID" value="AAL60040.1"/>
    <property type="molecule type" value="mRNA"/>
</dbReference>
<dbReference type="EMBL" id="AY133838">
    <property type="protein sequence ID" value="AAM91772.1"/>
    <property type="molecule type" value="mRNA"/>
</dbReference>
<dbReference type="EMBL" id="AY084433">
    <property type="protein sequence ID" value="AAM61006.1"/>
    <property type="molecule type" value="mRNA"/>
</dbReference>
<dbReference type="PIR" id="D96773">
    <property type="entry name" value="D96773"/>
</dbReference>
<dbReference type="RefSeq" id="NP_565086.1">
    <property type="nucleotide sequence ID" value="NM_106105.2"/>
</dbReference>
<dbReference type="FunCoup" id="Q9CA69">
    <property type="interactions" value="443"/>
</dbReference>
<dbReference type="STRING" id="3702.Q9CA69"/>
<dbReference type="iPTMnet" id="Q9CA69"/>
<dbReference type="PaxDb" id="3702-AT1G74450.1"/>
<dbReference type="ProteomicsDB" id="183323"/>
<dbReference type="EnsemblPlants" id="AT1G74450.1">
    <property type="protein sequence ID" value="AT1G74450.1"/>
    <property type="gene ID" value="AT1G74450"/>
</dbReference>
<dbReference type="GeneID" id="843786"/>
<dbReference type="Gramene" id="AT1G74450.1">
    <property type="protein sequence ID" value="AT1G74450.1"/>
    <property type="gene ID" value="AT1G74450"/>
</dbReference>
<dbReference type="KEGG" id="ath:AT1G74450"/>
<dbReference type="Araport" id="AT1G74450"/>
<dbReference type="TAIR" id="AT1G74450"/>
<dbReference type="eggNOG" id="ENOG502QQUT">
    <property type="taxonomic scope" value="Eukaryota"/>
</dbReference>
<dbReference type="HOGENOM" id="CLU_060027_0_0_1"/>
<dbReference type="InParanoid" id="Q9CA69"/>
<dbReference type="OMA" id="LCQDEFR"/>
<dbReference type="PRO" id="PR:Q9CA69"/>
<dbReference type="Proteomes" id="UP000006548">
    <property type="component" value="Chromosome 1"/>
</dbReference>
<dbReference type="ExpressionAtlas" id="Q9CA69">
    <property type="expression patterns" value="baseline and differential"/>
</dbReference>
<dbReference type="GO" id="GO:0005829">
    <property type="term" value="C:cytosol"/>
    <property type="evidence" value="ECO:0000314"/>
    <property type="project" value="TAIR"/>
</dbReference>
<dbReference type="GO" id="GO:0016020">
    <property type="term" value="C:membrane"/>
    <property type="evidence" value="ECO:0007669"/>
    <property type="project" value="UniProtKB-SubCell"/>
</dbReference>
<dbReference type="GO" id="GO:0080001">
    <property type="term" value="P:mucilage extrusion from seed coat"/>
    <property type="evidence" value="ECO:0000315"/>
    <property type="project" value="UniProtKB"/>
</dbReference>
<dbReference type="GO" id="GO:0009555">
    <property type="term" value="P:pollen development"/>
    <property type="evidence" value="ECO:0000315"/>
    <property type="project" value="TAIR"/>
</dbReference>
<dbReference type="GO" id="GO:0040008">
    <property type="term" value="P:regulation of growth"/>
    <property type="evidence" value="ECO:0000315"/>
    <property type="project" value="UniProtKB"/>
</dbReference>
<dbReference type="InterPro" id="IPR008511">
    <property type="entry name" value="ROH1-like"/>
</dbReference>
<dbReference type="PANTHER" id="PTHR31509">
    <property type="entry name" value="BPS1-LIKE PROTEIN"/>
    <property type="match status" value="1"/>
</dbReference>
<dbReference type="Pfam" id="PF05633">
    <property type="entry name" value="ROH1-like"/>
    <property type="match status" value="1"/>
</dbReference>